<evidence type="ECO:0000255" key="1">
    <source>
        <dbReference type="HAMAP-Rule" id="MF_00439"/>
    </source>
</evidence>
<geneLocation type="chloroplast"/>
<protein>
    <recommendedName>
        <fullName evidence="1">Photosystem I assembly protein Ycf3</fullName>
    </recommendedName>
</protein>
<name>YCF3_CHAGL</name>
<sequence>MPRSQRNDNFIDKTFTVVADILLRVIPTTRREKEAFSYYRDGMSAQSEGEYAEALQNYYEAMRLEIDPYDRSYILYNIGLIHTSNGQHTKALEYYLQALERNPALPQAFNNMAVICHYRGEQAIQQGDPENAEAWFDQAADYWKQGIALAPSNYIEAQNWLKITGRLKA</sequence>
<comment type="function">
    <text evidence="1">Essential for the assembly of the photosystem I (PSI) complex. May act as a chaperone-like factor to guide the assembly of the PSI subunits.</text>
</comment>
<comment type="subcellular location">
    <subcellularLocation>
        <location evidence="1">Plastid</location>
        <location evidence="1">Chloroplast thylakoid membrane</location>
        <topology evidence="1">Peripheral membrane protein</topology>
    </subcellularLocation>
</comment>
<comment type="similarity">
    <text evidence="1">Belongs to the Ycf3 family.</text>
</comment>
<keyword id="KW-0150">Chloroplast</keyword>
<keyword id="KW-0472">Membrane</keyword>
<keyword id="KW-0602">Photosynthesis</keyword>
<keyword id="KW-0934">Plastid</keyword>
<keyword id="KW-0677">Repeat</keyword>
<keyword id="KW-0793">Thylakoid</keyword>
<keyword id="KW-0802">TPR repeat</keyword>
<feature type="chain" id="PRO_0000217796" description="Photosystem I assembly protein Ycf3">
    <location>
        <begin position="1"/>
        <end position="169"/>
    </location>
</feature>
<feature type="repeat" description="TPR 1">
    <location>
        <begin position="35"/>
        <end position="68"/>
    </location>
</feature>
<feature type="repeat" description="TPR 2">
    <location>
        <begin position="72"/>
        <end position="105"/>
    </location>
</feature>
<feature type="repeat" description="TPR 3">
    <location>
        <begin position="120"/>
        <end position="153"/>
    </location>
</feature>
<accession>Q8M9W1</accession>
<proteinExistence type="inferred from homology"/>
<organism>
    <name type="scientific">Chaetosphaeridium globosum</name>
    <name type="common">Charophycean green alga</name>
    <name type="synonym">Herposteiron globosum</name>
    <dbReference type="NCBI Taxonomy" id="96477"/>
    <lineage>
        <taxon>Eukaryota</taxon>
        <taxon>Viridiplantae</taxon>
        <taxon>Streptophyta</taxon>
        <taxon>Coleochaetophyceae</taxon>
        <taxon>Coleochaetales</taxon>
        <taxon>Chaetosphaeridiaceae</taxon>
        <taxon>Chaetosphaeridium</taxon>
    </lineage>
</organism>
<dbReference type="EMBL" id="AF494278">
    <property type="protein sequence ID" value="AAM96583.1"/>
    <property type="molecule type" value="Genomic_DNA"/>
</dbReference>
<dbReference type="RefSeq" id="NP_683828.1">
    <property type="nucleotide sequence ID" value="NC_004115.1"/>
</dbReference>
<dbReference type="SMR" id="Q8M9W1"/>
<dbReference type="GeneID" id="860739"/>
<dbReference type="GO" id="GO:0009535">
    <property type="term" value="C:chloroplast thylakoid membrane"/>
    <property type="evidence" value="ECO:0007669"/>
    <property type="project" value="UniProtKB-SubCell"/>
</dbReference>
<dbReference type="GO" id="GO:0015979">
    <property type="term" value="P:photosynthesis"/>
    <property type="evidence" value="ECO:0007669"/>
    <property type="project" value="UniProtKB-UniRule"/>
</dbReference>
<dbReference type="FunFam" id="1.25.40.10:FF:000004">
    <property type="entry name" value="Photosystem I assembly protein Ycf3"/>
    <property type="match status" value="1"/>
</dbReference>
<dbReference type="Gene3D" id="1.25.40.10">
    <property type="entry name" value="Tetratricopeptide repeat domain"/>
    <property type="match status" value="1"/>
</dbReference>
<dbReference type="HAMAP" id="MF_00439">
    <property type="entry name" value="Ycf3"/>
    <property type="match status" value="1"/>
</dbReference>
<dbReference type="InterPro" id="IPR022818">
    <property type="entry name" value="PSI_Ycf3_assembly"/>
</dbReference>
<dbReference type="InterPro" id="IPR011990">
    <property type="entry name" value="TPR-like_helical_dom_sf"/>
</dbReference>
<dbReference type="InterPro" id="IPR019734">
    <property type="entry name" value="TPR_rpt"/>
</dbReference>
<dbReference type="NCBIfam" id="NF002725">
    <property type="entry name" value="PRK02603.1"/>
    <property type="match status" value="1"/>
</dbReference>
<dbReference type="Pfam" id="PF00515">
    <property type="entry name" value="TPR_1"/>
    <property type="match status" value="1"/>
</dbReference>
<dbReference type="SMART" id="SM00028">
    <property type="entry name" value="TPR"/>
    <property type="match status" value="3"/>
</dbReference>
<dbReference type="SUPFAM" id="SSF48452">
    <property type="entry name" value="TPR-like"/>
    <property type="match status" value="1"/>
</dbReference>
<dbReference type="PROSITE" id="PS50005">
    <property type="entry name" value="TPR"/>
    <property type="match status" value="3"/>
</dbReference>
<dbReference type="PROSITE" id="PS50293">
    <property type="entry name" value="TPR_REGION"/>
    <property type="match status" value="1"/>
</dbReference>
<reference key="1">
    <citation type="journal article" date="2002" name="Proc. Natl. Acad. Sci. U.S.A.">
        <title>The chloroplast and mitochondrial genome sequences of the charophyte Chaetosphaeridium globosum: insights into the timing of the events that restructured organelle DNAs within the green algal lineage that led to land plants.</title>
        <authorList>
            <person name="Turmel M."/>
            <person name="Otis C."/>
            <person name="Lemieux C."/>
        </authorList>
    </citation>
    <scope>NUCLEOTIDE SEQUENCE [LARGE SCALE GENOMIC DNA]</scope>
    <source>
        <strain>M1311</strain>
    </source>
</reference>
<gene>
    <name evidence="1" type="primary">ycf3</name>
</gene>